<organism>
    <name type="scientific">Burkholderia orbicola (strain AU 1054)</name>
    <dbReference type="NCBI Taxonomy" id="331271"/>
    <lineage>
        <taxon>Bacteria</taxon>
        <taxon>Pseudomonadati</taxon>
        <taxon>Pseudomonadota</taxon>
        <taxon>Betaproteobacteria</taxon>
        <taxon>Burkholderiales</taxon>
        <taxon>Burkholderiaceae</taxon>
        <taxon>Burkholderia</taxon>
        <taxon>Burkholderia cepacia complex</taxon>
        <taxon>Burkholderia orbicola</taxon>
    </lineage>
</organism>
<sequence>MAVFTAVSDSDLAQWMRHYELGDVLAFRGIPSGIENSNFFLTTTRGEYVLTIFEKLTAQQLPFYLDLMRHLAAHGVPVPDPIPRDDGALFGELHGKPAAIVTKLDGAAELAPGVEHCIEVGQMLARLHLAGRDYPRNQPNLRSLPWWQENVPAIVPFITDAQRALLEGELAHQAGFFASDDYAALPAGPCHCDLFRDNVLFAHAAPGTGHDVRLGGFFDFYFAGCDKWLFDVAVTVNDWCVDLATGVLDVARADALLRAYQTVRPFTAEERRHWSDMLRAGAYRFWVSRLYDFYLPRAAEMLKPHDPGHFERILRERIAHTPALPEIQTACN</sequence>
<comment type="catalytic activity">
    <reaction evidence="1">
        <text>L-homoserine + ATP = O-phospho-L-homoserine + ADP + H(+)</text>
        <dbReference type="Rhea" id="RHEA:13985"/>
        <dbReference type="ChEBI" id="CHEBI:15378"/>
        <dbReference type="ChEBI" id="CHEBI:30616"/>
        <dbReference type="ChEBI" id="CHEBI:57476"/>
        <dbReference type="ChEBI" id="CHEBI:57590"/>
        <dbReference type="ChEBI" id="CHEBI:456216"/>
        <dbReference type="EC" id="2.7.1.39"/>
    </reaction>
</comment>
<comment type="pathway">
    <text evidence="1">Amino-acid biosynthesis; L-threonine biosynthesis; L-threonine from L-aspartate: step 4/5.</text>
</comment>
<comment type="similarity">
    <text evidence="1">Belongs to the pseudomonas-type ThrB family.</text>
</comment>
<reference key="1">
    <citation type="submission" date="2006-05" db="EMBL/GenBank/DDBJ databases">
        <title>Complete sequence of chromosome 2 of Burkholderia cenocepacia AU 1054.</title>
        <authorList>
            <consortium name="US DOE Joint Genome Institute"/>
            <person name="Copeland A."/>
            <person name="Lucas S."/>
            <person name="Lapidus A."/>
            <person name="Barry K."/>
            <person name="Detter J.C."/>
            <person name="Glavina del Rio T."/>
            <person name="Hammon N."/>
            <person name="Israni S."/>
            <person name="Dalin E."/>
            <person name="Tice H."/>
            <person name="Pitluck S."/>
            <person name="Chain P."/>
            <person name="Malfatti S."/>
            <person name="Shin M."/>
            <person name="Vergez L."/>
            <person name="Schmutz J."/>
            <person name="Larimer F."/>
            <person name="Land M."/>
            <person name="Hauser L."/>
            <person name="Kyrpides N."/>
            <person name="Lykidis A."/>
            <person name="LiPuma J.J."/>
            <person name="Konstantinidis K."/>
            <person name="Tiedje J.M."/>
            <person name="Richardson P."/>
        </authorList>
    </citation>
    <scope>NUCLEOTIDE SEQUENCE [LARGE SCALE GENOMIC DNA]</scope>
    <source>
        <strain>AU 1054</strain>
    </source>
</reference>
<name>KHSE_BURO1</name>
<keyword id="KW-0028">Amino-acid biosynthesis</keyword>
<keyword id="KW-0067">ATP-binding</keyword>
<keyword id="KW-0418">Kinase</keyword>
<keyword id="KW-0547">Nucleotide-binding</keyword>
<keyword id="KW-0791">Threonine biosynthesis</keyword>
<keyword id="KW-0808">Transferase</keyword>
<protein>
    <recommendedName>
        <fullName evidence="1">Homoserine kinase</fullName>
        <shortName evidence="1">HK</shortName>
        <shortName evidence="1">HSK</shortName>
        <ecNumber evidence="1">2.7.1.39</ecNumber>
    </recommendedName>
</protein>
<proteinExistence type="inferred from homology"/>
<accession>Q1BLX6</accession>
<evidence type="ECO:0000255" key="1">
    <source>
        <dbReference type="HAMAP-Rule" id="MF_00301"/>
    </source>
</evidence>
<gene>
    <name evidence="1" type="primary">thrB</name>
    <name type="ordered locus">Bcen_4497</name>
</gene>
<dbReference type="EC" id="2.7.1.39" evidence="1"/>
<dbReference type="EMBL" id="CP000379">
    <property type="protein sequence ID" value="ABF79379.1"/>
    <property type="molecule type" value="Genomic_DNA"/>
</dbReference>
<dbReference type="SMR" id="Q1BLX6"/>
<dbReference type="HOGENOM" id="CLU_053300_0_0_4"/>
<dbReference type="UniPathway" id="UPA00050">
    <property type="reaction ID" value="UER00064"/>
</dbReference>
<dbReference type="GO" id="GO:0005524">
    <property type="term" value="F:ATP binding"/>
    <property type="evidence" value="ECO:0007669"/>
    <property type="project" value="UniProtKB-KW"/>
</dbReference>
<dbReference type="GO" id="GO:0004413">
    <property type="term" value="F:homoserine kinase activity"/>
    <property type="evidence" value="ECO:0007669"/>
    <property type="project" value="UniProtKB-UniRule"/>
</dbReference>
<dbReference type="GO" id="GO:0009088">
    <property type="term" value="P:threonine biosynthetic process"/>
    <property type="evidence" value="ECO:0007669"/>
    <property type="project" value="UniProtKB-UniRule"/>
</dbReference>
<dbReference type="CDD" id="cd05153">
    <property type="entry name" value="HomoserineK_II"/>
    <property type="match status" value="1"/>
</dbReference>
<dbReference type="Gene3D" id="3.90.1200.10">
    <property type="match status" value="1"/>
</dbReference>
<dbReference type="Gene3D" id="3.30.200.20">
    <property type="entry name" value="Phosphorylase Kinase, domain 1"/>
    <property type="match status" value="1"/>
</dbReference>
<dbReference type="HAMAP" id="MF_00301">
    <property type="entry name" value="Homoser_kinase_2"/>
    <property type="match status" value="1"/>
</dbReference>
<dbReference type="InterPro" id="IPR002575">
    <property type="entry name" value="Aminoglycoside_PTrfase"/>
</dbReference>
<dbReference type="InterPro" id="IPR005280">
    <property type="entry name" value="Homoserine_kinase_II"/>
</dbReference>
<dbReference type="InterPro" id="IPR011009">
    <property type="entry name" value="Kinase-like_dom_sf"/>
</dbReference>
<dbReference type="InterPro" id="IPR050249">
    <property type="entry name" value="Pseudomonas-type_ThrB"/>
</dbReference>
<dbReference type="NCBIfam" id="NF003558">
    <property type="entry name" value="PRK05231.1"/>
    <property type="match status" value="1"/>
</dbReference>
<dbReference type="NCBIfam" id="TIGR00938">
    <property type="entry name" value="thrB_alt"/>
    <property type="match status" value="1"/>
</dbReference>
<dbReference type="PANTHER" id="PTHR21064:SF6">
    <property type="entry name" value="AMINOGLYCOSIDE PHOSPHOTRANSFERASE DOMAIN-CONTAINING PROTEIN"/>
    <property type="match status" value="1"/>
</dbReference>
<dbReference type="PANTHER" id="PTHR21064">
    <property type="entry name" value="AMINOGLYCOSIDE PHOSPHOTRANSFERASE DOMAIN-CONTAINING PROTEIN-RELATED"/>
    <property type="match status" value="1"/>
</dbReference>
<dbReference type="Pfam" id="PF01636">
    <property type="entry name" value="APH"/>
    <property type="match status" value="1"/>
</dbReference>
<dbReference type="SUPFAM" id="SSF56112">
    <property type="entry name" value="Protein kinase-like (PK-like)"/>
    <property type="match status" value="1"/>
</dbReference>
<feature type="chain" id="PRO_0000300784" description="Homoserine kinase">
    <location>
        <begin position="1"/>
        <end position="332"/>
    </location>
</feature>